<organism>
    <name type="scientific">Shouchella clausii (strain KSM-K16)</name>
    <name type="common">Alkalihalobacillus clausii</name>
    <dbReference type="NCBI Taxonomy" id="66692"/>
    <lineage>
        <taxon>Bacteria</taxon>
        <taxon>Bacillati</taxon>
        <taxon>Bacillota</taxon>
        <taxon>Bacilli</taxon>
        <taxon>Bacillales</taxon>
        <taxon>Bacillaceae</taxon>
        <taxon>Shouchella</taxon>
    </lineage>
</organism>
<sequence length="89" mass="10302">MAKKAKVQKELKRQELVAQYAEKRKELKEKGDYVALAKLPRDSAPSRLTRRCRKTGRPRGVLRDFELSRIAFRELAHKGQIPGVKKASW</sequence>
<dbReference type="EMBL" id="AP006627">
    <property type="protein sequence ID" value="BAD66550.1"/>
    <property type="molecule type" value="Genomic_DNA"/>
</dbReference>
<dbReference type="RefSeq" id="WP_011248853.1">
    <property type="nucleotide sequence ID" value="NC_006582.1"/>
</dbReference>
<dbReference type="SMR" id="Q5WAR0"/>
<dbReference type="STRING" id="66692.ABC4019"/>
<dbReference type="KEGG" id="bcl:ABC4019"/>
<dbReference type="eggNOG" id="COG0199">
    <property type="taxonomic scope" value="Bacteria"/>
</dbReference>
<dbReference type="HOGENOM" id="CLU_139869_0_0_9"/>
<dbReference type="OrthoDB" id="9810484at2"/>
<dbReference type="Proteomes" id="UP000001168">
    <property type="component" value="Chromosome"/>
</dbReference>
<dbReference type="GO" id="GO:0005737">
    <property type="term" value="C:cytoplasm"/>
    <property type="evidence" value="ECO:0007669"/>
    <property type="project" value="UniProtKB-ARBA"/>
</dbReference>
<dbReference type="GO" id="GO:0015935">
    <property type="term" value="C:small ribosomal subunit"/>
    <property type="evidence" value="ECO:0007669"/>
    <property type="project" value="TreeGrafter"/>
</dbReference>
<dbReference type="GO" id="GO:0019843">
    <property type="term" value="F:rRNA binding"/>
    <property type="evidence" value="ECO:0007669"/>
    <property type="project" value="UniProtKB-UniRule"/>
</dbReference>
<dbReference type="GO" id="GO:0003735">
    <property type="term" value="F:structural constituent of ribosome"/>
    <property type="evidence" value="ECO:0007669"/>
    <property type="project" value="InterPro"/>
</dbReference>
<dbReference type="GO" id="GO:0006412">
    <property type="term" value="P:translation"/>
    <property type="evidence" value="ECO:0007669"/>
    <property type="project" value="UniProtKB-UniRule"/>
</dbReference>
<dbReference type="FunFam" id="4.10.830.10:FF:000003">
    <property type="entry name" value="30S ribosomal protein S14"/>
    <property type="match status" value="1"/>
</dbReference>
<dbReference type="Gene3D" id="4.10.830.10">
    <property type="entry name" value="30s Ribosomal Protein S14, Chain N"/>
    <property type="match status" value="1"/>
</dbReference>
<dbReference type="HAMAP" id="MF_00537">
    <property type="entry name" value="Ribosomal_uS14_1"/>
    <property type="match status" value="1"/>
</dbReference>
<dbReference type="InterPro" id="IPR001209">
    <property type="entry name" value="Ribosomal_uS14"/>
</dbReference>
<dbReference type="InterPro" id="IPR023036">
    <property type="entry name" value="Ribosomal_uS14_bac/plastid"/>
</dbReference>
<dbReference type="InterPro" id="IPR018271">
    <property type="entry name" value="Ribosomal_uS14_CS"/>
</dbReference>
<dbReference type="InterPro" id="IPR043140">
    <property type="entry name" value="Ribosomal_uS14_sf"/>
</dbReference>
<dbReference type="NCBIfam" id="NF006477">
    <property type="entry name" value="PRK08881.1"/>
    <property type="match status" value="1"/>
</dbReference>
<dbReference type="PANTHER" id="PTHR19836">
    <property type="entry name" value="30S RIBOSOMAL PROTEIN S14"/>
    <property type="match status" value="1"/>
</dbReference>
<dbReference type="PANTHER" id="PTHR19836:SF19">
    <property type="entry name" value="SMALL RIBOSOMAL SUBUNIT PROTEIN US14M"/>
    <property type="match status" value="1"/>
</dbReference>
<dbReference type="Pfam" id="PF00253">
    <property type="entry name" value="Ribosomal_S14"/>
    <property type="match status" value="1"/>
</dbReference>
<dbReference type="SUPFAM" id="SSF57716">
    <property type="entry name" value="Glucocorticoid receptor-like (DNA-binding domain)"/>
    <property type="match status" value="1"/>
</dbReference>
<dbReference type="PROSITE" id="PS00527">
    <property type="entry name" value="RIBOSOMAL_S14"/>
    <property type="match status" value="1"/>
</dbReference>
<evidence type="ECO:0000255" key="1">
    <source>
        <dbReference type="HAMAP-Rule" id="MF_00537"/>
    </source>
</evidence>
<name>RS14_SHOC1</name>
<gene>
    <name evidence="1" type="primary">rpsN</name>
    <name type="ordered locus">ABC4019</name>
</gene>
<keyword id="KW-1185">Reference proteome</keyword>
<keyword id="KW-0687">Ribonucleoprotein</keyword>
<keyword id="KW-0689">Ribosomal protein</keyword>
<keyword id="KW-0694">RNA-binding</keyword>
<keyword id="KW-0699">rRNA-binding</keyword>
<accession>Q5WAR0</accession>
<reference key="1">
    <citation type="submission" date="2003-10" db="EMBL/GenBank/DDBJ databases">
        <title>The complete genome sequence of the alkaliphilic Bacillus clausii KSM-K16.</title>
        <authorList>
            <person name="Takaki Y."/>
            <person name="Kageyama Y."/>
            <person name="Shimamura S."/>
            <person name="Suzuki H."/>
            <person name="Nishi S."/>
            <person name="Hatada Y."/>
            <person name="Kawai S."/>
            <person name="Ito S."/>
            <person name="Horikoshi K."/>
        </authorList>
    </citation>
    <scope>NUCLEOTIDE SEQUENCE [LARGE SCALE GENOMIC DNA]</scope>
    <source>
        <strain>KSM-K16</strain>
    </source>
</reference>
<comment type="function">
    <text evidence="1">Binds 16S rRNA, required for the assembly of 30S particles and may also be responsible for determining the conformation of the 16S rRNA at the A site.</text>
</comment>
<comment type="subunit">
    <text evidence="1">Part of the 30S ribosomal subunit. Contacts proteins S3 and S10.</text>
</comment>
<comment type="similarity">
    <text evidence="1">Belongs to the universal ribosomal protein uS14 family.</text>
</comment>
<protein>
    <recommendedName>
        <fullName evidence="1">Small ribosomal subunit protein uS14</fullName>
    </recommendedName>
    <alternativeName>
        <fullName>30S ribosomal protein S14</fullName>
    </alternativeName>
</protein>
<proteinExistence type="inferred from homology"/>
<feature type="chain" id="PRO_0000269041" description="Small ribosomal subunit protein uS14">
    <location>
        <begin position="1"/>
        <end position="89"/>
    </location>
</feature>